<comment type="function">
    <text evidence="1">Condensation of UDP-2,3-diacylglucosamine and 2,3-diacylglucosamine-1-phosphate to form lipid A disaccharide, a precursor of lipid A, a phosphorylated glycolipid that anchors the lipopolysaccharide to the outer membrane of the cell.</text>
</comment>
<comment type="catalytic activity">
    <reaction evidence="1">
        <text>a lipid X + a UDP-2-N,3-O-bis[(3R)-3-hydroxyacyl]-alpha-D-glucosamine = a lipid A disaccharide + UDP + H(+)</text>
        <dbReference type="Rhea" id="RHEA:67828"/>
        <dbReference type="ChEBI" id="CHEBI:15378"/>
        <dbReference type="ChEBI" id="CHEBI:58223"/>
        <dbReference type="ChEBI" id="CHEBI:137748"/>
        <dbReference type="ChEBI" id="CHEBI:176338"/>
        <dbReference type="ChEBI" id="CHEBI:176343"/>
        <dbReference type="EC" id="2.4.1.182"/>
    </reaction>
</comment>
<comment type="pathway">
    <text evidence="1">Bacterial outer membrane biogenesis; LPS lipid A biosynthesis.</text>
</comment>
<comment type="similarity">
    <text evidence="1">Belongs to the LpxB family.</text>
</comment>
<accession>Q4KHG3</accession>
<dbReference type="EC" id="2.4.1.182" evidence="1"/>
<dbReference type="EMBL" id="CP000076">
    <property type="protein sequence ID" value="AAY90476.1"/>
    <property type="molecule type" value="Genomic_DNA"/>
</dbReference>
<dbReference type="SMR" id="Q4KHG3"/>
<dbReference type="STRING" id="220664.PFL_1189"/>
<dbReference type="CAZy" id="GT19">
    <property type="family name" value="Glycosyltransferase Family 19"/>
</dbReference>
<dbReference type="KEGG" id="pfl:PFL_1189"/>
<dbReference type="PATRIC" id="fig|220664.5.peg.1221"/>
<dbReference type="eggNOG" id="COG0763">
    <property type="taxonomic scope" value="Bacteria"/>
</dbReference>
<dbReference type="HOGENOM" id="CLU_036577_3_0_6"/>
<dbReference type="UniPathway" id="UPA00973"/>
<dbReference type="Proteomes" id="UP000008540">
    <property type="component" value="Chromosome"/>
</dbReference>
<dbReference type="GO" id="GO:0016020">
    <property type="term" value="C:membrane"/>
    <property type="evidence" value="ECO:0007669"/>
    <property type="project" value="GOC"/>
</dbReference>
<dbReference type="GO" id="GO:0008915">
    <property type="term" value="F:lipid-A-disaccharide synthase activity"/>
    <property type="evidence" value="ECO:0007669"/>
    <property type="project" value="UniProtKB-UniRule"/>
</dbReference>
<dbReference type="GO" id="GO:0005543">
    <property type="term" value="F:phospholipid binding"/>
    <property type="evidence" value="ECO:0007669"/>
    <property type="project" value="TreeGrafter"/>
</dbReference>
<dbReference type="GO" id="GO:0009245">
    <property type="term" value="P:lipid A biosynthetic process"/>
    <property type="evidence" value="ECO:0007669"/>
    <property type="project" value="UniProtKB-UniRule"/>
</dbReference>
<dbReference type="Gene3D" id="3.40.50.2000">
    <property type="entry name" value="Glycogen Phosphorylase B"/>
    <property type="match status" value="1"/>
</dbReference>
<dbReference type="HAMAP" id="MF_00392">
    <property type="entry name" value="LpxB"/>
    <property type="match status" value="1"/>
</dbReference>
<dbReference type="InterPro" id="IPR003835">
    <property type="entry name" value="Glyco_trans_19"/>
</dbReference>
<dbReference type="NCBIfam" id="TIGR00215">
    <property type="entry name" value="lpxB"/>
    <property type="match status" value="1"/>
</dbReference>
<dbReference type="PANTHER" id="PTHR30372">
    <property type="entry name" value="LIPID-A-DISACCHARIDE SYNTHASE"/>
    <property type="match status" value="1"/>
</dbReference>
<dbReference type="PANTHER" id="PTHR30372:SF4">
    <property type="entry name" value="LIPID-A-DISACCHARIDE SYNTHASE, MITOCHONDRIAL-RELATED"/>
    <property type="match status" value="1"/>
</dbReference>
<dbReference type="Pfam" id="PF02684">
    <property type="entry name" value="LpxB"/>
    <property type="match status" value="1"/>
</dbReference>
<dbReference type="SUPFAM" id="SSF53756">
    <property type="entry name" value="UDP-Glycosyltransferase/glycogen phosphorylase"/>
    <property type="match status" value="1"/>
</dbReference>
<proteinExistence type="inferred from homology"/>
<feature type="chain" id="PRO_0000255207" description="Lipid-A-disaccharide synthase">
    <location>
        <begin position="1"/>
        <end position="374"/>
    </location>
</feature>
<sequence>MSTLRIALVAGEASGDILGAGLMRALKVQHPAVEFIGVGGPLMEAEGLVSYFPMERLAVMGLVEVLGRLRELLARRKKLIQTLIAEKPDVFIGIDAPDFTLNIELKLRQARIKTVHYVSPSVWAWRQKRVLKIREGCDLMLTLFPFEARFYEEKGVPVKFVGHSLADAIPLEADRAAARAELGLPEGPLVALMPGSRGGEVGRLGALFLDAAQRLRAMRPGVRFIMPCASPERRVQLEQLLANRDLPLTLLDGQSHKALAACDAVLIASGTATLEALLYKRPMVVAYRLAPLTFWILKRMVKSPYISLPNLLAQRLLVPELLQDDATADALAQTLSPLIEGGEEQTRGFDEIHRTLRRDASNQAAQAVLGLIGK</sequence>
<name>LPXB_PSEF5</name>
<reference key="1">
    <citation type="journal article" date="2005" name="Nat. Biotechnol.">
        <title>Complete genome sequence of the plant commensal Pseudomonas fluorescens Pf-5.</title>
        <authorList>
            <person name="Paulsen I.T."/>
            <person name="Press C.M."/>
            <person name="Ravel J."/>
            <person name="Kobayashi D.Y."/>
            <person name="Myers G.S.A."/>
            <person name="Mavrodi D.V."/>
            <person name="DeBoy R.T."/>
            <person name="Seshadri R."/>
            <person name="Ren Q."/>
            <person name="Madupu R."/>
            <person name="Dodson R.J."/>
            <person name="Durkin A.S."/>
            <person name="Brinkac L.M."/>
            <person name="Daugherty S.C."/>
            <person name="Sullivan S.A."/>
            <person name="Rosovitz M.J."/>
            <person name="Gwinn M.L."/>
            <person name="Zhou L."/>
            <person name="Schneider D.J."/>
            <person name="Cartinhour S.W."/>
            <person name="Nelson W.C."/>
            <person name="Weidman J."/>
            <person name="Watkins K."/>
            <person name="Tran K."/>
            <person name="Khouri H."/>
            <person name="Pierson E.A."/>
            <person name="Pierson L.S. III"/>
            <person name="Thomashow L.S."/>
            <person name="Loper J.E."/>
        </authorList>
    </citation>
    <scope>NUCLEOTIDE SEQUENCE [LARGE SCALE GENOMIC DNA]</scope>
    <source>
        <strain>ATCC BAA-477 / NRRL B-23932 / Pf-5</strain>
    </source>
</reference>
<evidence type="ECO:0000255" key="1">
    <source>
        <dbReference type="HAMAP-Rule" id="MF_00392"/>
    </source>
</evidence>
<gene>
    <name evidence="1" type="primary">lpxB</name>
    <name type="ordered locus">PFL_1189</name>
</gene>
<protein>
    <recommendedName>
        <fullName evidence="1">Lipid-A-disaccharide synthase</fullName>
        <ecNumber evidence="1">2.4.1.182</ecNumber>
    </recommendedName>
</protein>
<keyword id="KW-0328">Glycosyltransferase</keyword>
<keyword id="KW-0441">Lipid A biosynthesis</keyword>
<keyword id="KW-0444">Lipid biosynthesis</keyword>
<keyword id="KW-0443">Lipid metabolism</keyword>
<keyword id="KW-0808">Transferase</keyword>
<organism>
    <name type="scientific">Pseudomonas fluorescens (strain ATCC BAA-477 / NRRL B-23932 / Pf-5)</name>
    <dbReference type="NCBI Taxonomy" id="220664"/>
    <lineage>
        <taxon>Bacteria</taxon>
        <taxon>Pseudomonadati</taxon>
        <taxon>Pseudomonadota</taxon>
        <taxon>Gammaproteobacteria</taxon>
        <taxon>Pseudomonadales</taxon>
        <taxon>Pseudomonadaceae</taxon>
        <taxon>Pseudomonas</taxon>
    </lineage>
</organism>